<gene>
    <name type="primary">ddh</name>
    <name type="ordered locus">HI_0085</name>
</gene>
<feature type="chain" id="PRO_0000076021" description="2-hydroxyacid dehydrogenase homolog">
    <location>
        <begin position="1"/>
        <end position="331"/>
    </location>
</feature>
<feature type="active site" evidence="1">
    <location>
        <position position="234"/>
    </location>
</feature>
<feature type="active site" evidence="1">
    <location>
        <position position="263"/>
    </location>
</feature>
<feature type="active site" description="Proton donor" evidence="1">
    <location>
        <position position="295"/>
    </location>
</feature>
<feature type="binding site" evidence="1">
    <location>
        <begin position="154"/>
        <end position="155"/>
    </location>
    <ligand>
        <name>NAD(+)</name>
        <dbReference type="ChEBI" id="CHEBI:57540"/>
    </ligand>
</feature>
<feature type="binding site" evidence="1">
    <location>
        <begin position="232"/>
        <end position="234"/>
    </location>
    <ligand>
        <name>NAD(+)</name>
        <dbReference type="ChEBI" id="CHEBI:57540"/>
    </ligand>
</feature>
<feature type="binding site" evidence="1">
    <location>
        <position position="258"/>
    </location>
    <ligand>
        <name>NAD(+)</name>
        <dbReference type="ChEBI" id="CHEBI:57540"/>
    </ligand>
</feature>
<feature type="binding site" evidence="1">
    <location>
        <begin position="295"/>
        <end position="298"/>
    </location>
    <ligand>
        <name>NAD(+)</name>
        <dbReference type="ChEBI" id="CHEBI:57540"/>
    </ligand>
</feature>
<keyword id="KW-0520">NAD</keyword>
<keyword id="KW-0560">Oxidoreductase</keyword>
<keyword id="KW-1185">Reference proteome</keyword>
<name>DDH_HAEIN</name>
<evidence type="ECO:0000250" key="1"/>
<evidence type="ECO:0000305" key="2"/>
<organism>
    <name type="scientific">Haemophilus influenzae (strain ATCC 51907 / DSM 11121 / KW20 / Rd)</name>
    <dbReference type="NCBI Taxonomy" id="71421"/>
    <lineage>
        <taxon>Bacteria</taxon>
        <taxon>Pseudomonadati</taxon>
        <taxon>Pseudomonadota</taxon>
        <taxon>Gammaproteobacteria</taxon>
        <taxon>Pasteurellales</taxon>
        <taxon>Pasteurellaceae</taxon>
        <taxon>Haemophilus</taxon>
    </lineage>
</organism>
<accession>P44501</accession>
<protein>
    <recommendedName>
        <fullName>2-hydroxyacid dehydrogenase homolog</fullName>
        <ecNumber>1.1.1.-</ecNumber>
    </recommendedName>
</protein>
<reference key="1">
    <citation type="journal article" date="1995" name="Science">
        <title>Whole-genome random sequencing and assembly of Haemophilus influenzae Rd.</title>
        <authorList>
            <person name="Fleischmann R.D."/>
            <person name="Adams M.D."/>
            <person name="White O."/>
            <person name="Clayton R.A."/>
            <person name="Kirkness E.F."/>
            <person name="Kerlavage A.R."/>
            <person name="Bult C.J."/>
            <person name="Tomb J.-F."/>
            <person name="Dougherty B.A."/>
            <person name="Merrick J.M."/>
            <person name="McKenney K."/>
            <person name="Sutton G.G."/>
            <person name="FitzHugh W."/>
            <person name="Fields C.A."/>
            <person name="Gocayne J.D."/>
            <person name="Scott J.D."/>
            <person name="Shirley R."/>
            <person name="Liu L.-I."/>
            <person name="Glodek A."/>
            <person name="Kelley J.M."/>
            <person name="Weidman J.F."/>
            <person name="Phillips C.A."/>
            <person name="Spriggs T."/>
            <person name="Hedblom E."/>
            <person name="Cotton M.D."/>
            <person name="Utterback T.R."/>
            <person name="Hanna M.C."/>
            <person name="Nguyen D.T."/>
            <person name="Saudek D.M."/>
            <person name="Brandon R.C."/>
            <person name="Fine L.D."/>
            <person name="Fritchman J.L."/>
            <person name="Fuhrmann J.L."/>
            <person name="Geoghagen N.S.M."/>
            <person name="Gnehm C.L."/>
            <person name="McDonald L.A."/>
            <person name="Small K.V."/>
            <person name="Fraser C.M."/>
            <person name="Smith H.O."/>
            <person name="Venter J.C."/>
        </authorList>
    </citation>
    <scope>NUCLEOTIDE SEQUENCE [LARGE SCALE GENOMIC DNA]</scope>
    <source>
        <strain>ATCC 51907 / DSM 11121 / KW20 / Rd</strain>
    </source>
</reference>
<proteinExistence type="inferred from homology"/>
<comment type="similarity">
    <text evidence="2">Belongs to the D-isomer specific 2-hydroxyacid dehydrogenase family.</text>
</comment>
<sequence length="331" mass="37088">MKIAIYSTKSYDRKYIELINAKYNFDLEFFDFMLNESTVRLAEHCEVVCIFVNDNGSRKVLEKLAALGVKIVALRCAGFNNVDLKAAQELGIQVVRVPAYSPEAVAEHTIGLMMTLNRRIHRAYQRTREANFSLEGLIGFNMYGRTVGVIGTGKIGIAVMRILKGFGMNILAYDPFKNPVVEELGGQYVELDELYAKSHVITLHCPATPENYHLLNCEAFAKMKDGVMIVNTSRGSLIDTQAAIDALKQRKIGALGMDVYENERDLFFEDKSNEVIQDDIFRRLSSCHNVLLTGHQAFLTEEALTNIADVTLSNIYKLKSGKVCENIVLPS</sequence>
<dbReference type="EC" id="1.1.1.-"/>
<dbReference type="EMBL" id="L42023">
    <property type="protein sequence ID" value="AAC21763.1"/>
    <property type="molecule type" value="Genomic_DNA"/>
</dbReference>
<dbReference type="PIR" id="F64047">
    <property type="entry name" value="F64047"/>
</dbReference>
<dbReference type="RefSeq" id="NP_438258.1">
    <property type="nucleotide sequence ID" value="NC_000907.1"/>
</dbReference>
<dbReference type="SMR" id="P44501"/>
<dbReference type="STRING" id="71421.HI_0085"/>
<dbReference type="EnsemblBacteria" id="AAC21763">
    <property type="protein sequence ID" value="AAC21763"/>
    <property type="gene ID" value="HI_0085"/>
</dbReference>
<dbReference type="KEGG" id="hin:HI_0085"/>
<dbReference type="PATRIC" id="fig|71421.8.peg.86"/>
<dbReference type="eggNOG" id="COG1052">
    <property type="taxonomic scope" value="Bacteria"/>
</dbReference>
<dbReference type="HOGENOM" id="CLU_019796_1_1_6"/>
<dbReference type="OrthoDB" id="9805416at2"/>
<dbReference type="PhylomeDB" id="P44501"/>
<dbReference type="BioCyc" id="HINF71421:G1GJ1-86-MONOMER"/>
<dbReference type="Proteomes" id="UP000000579">
    <property type="component" value="Chromosome"/>
</dbReference>
<dbReference type="GO" id="GO:0008720">
    <property type="term" value="F:D-lactate dehydrogenase activity"/>
    <property type="evidence" value="ECO:0000318"/>
    <property type="project" value="GO_Central"/>
</dbReference>
<dbReference type="GO" id="GO:0051287">
    <property type="term" value="F:NAD binding"/>
    <property type="evidence" value="ECO:0007669"/>
    <property type="project" value="InterPro"/>
</dbReference>
<dbReference type="CDD" id="cd12183">
    <property type="entry name" value="LDH_like_2"/>
    <property type="match status" value="1"/>
</dbReference>
<dbReference type="FunFam" id="3.40.50.720:FF:000050">
    <property type="entry name" value="D-lactate dehydrogenase"/>
    <property type="match status" value="1"/>
</dbReference>
<dbReference type="Gene3D" id="3.40.50.720">
    <property type="entry name" value="NAD(P)-binding Rossmann-like Domain"/>
    <property type="match status" value="2"/>
</dbReference>
<dbReference type="InterPro" id="IPR006139">
    <property type="entry name" value="D-isomer_2_OHA_DH_cat_dom"/>
</dbReference>
<dbReference type="InterPro" id="IPR029753">
    <property type="entry name" value="D-isomer_DH_CS"/>
</dbReference>
<dbReference type="InterPro" id="IPR029752">
    <property type="entry name" value="D-isomer_DH_CS1"/>
</dbReference>
<dbReference type="InterPro" id="IPR006140">
    <property type="entry name" value="D-isomer_DH_NAD-bd"/>
</dbReference>
<dbReference type="InterPro" id="IPR036291">
    <property type="entry name" value="NAD(P)-bd_dom_sf"/>
</dbReference>
<dbReference type="PANTHER" id="PTHR43026">
    <property type="entry name" value="2-HYDROXYACID DEHYDROGENASE HOMOLOG 1-RELATED"/>
    <property type="match status" value="1"/>
</dbReference>
<dbReference type="PANTHER" id="PTHR43026:SF1">
    <property type="entry name" value="2-HYDROXYACID DEHYDROGENASE HOMOLOG 1-RELATED"/>
    <property type="match status" value="1"/>
</dbReference>
<dbReference type="Pfam" id="PF00389">
    <property type="entry name" value="2-Hacid_dh"/>
    <property type="match status" value="1"/>
</dbReference>
<dbReference type="Pfam" id="PF02826">
    <property type="entry name" value="2-Hacid_dh_C"/>
    <property type="match status" value="1"/>
</dbReference>
<dbReference type="SUPFAM" id="SSF52283">
    <property type="entry name" value="Formate/glycerate dehydrogenase catalytic domain-like"/>
    <property type="match status" value="1"/>
</dbReference>
<dbReference type="SUPFAM" id="SSF51735">
    <property type="entry name" value="NAD(P)-binding Rossmann-fold domains"/>
    <property type="match status" value="1"/>
</dbReference>
<dbReference type="PROSITE" id="PS00065">
    <property type="entry name" value="D_2_HYDROXYACID_DH_1"/>
    <property type="match status" value="1"/>
</dbReference>
<dbReference type="PROSITE" id="PS00670">
    <property type="entry name" value="D_2_HYDROXYACID_DH_2"/>
    <property type="match status" value="1"/>
</dbReference>
<dbReference type="PROSITE" id="PS00671">
    <property type="entry name" value="D_2_HYDROXYACID_DH_3"/>
    <property type="match status" value="1"/>
</dbReference>